<evidence type="ECO:0000255" key="1">
    <source>
        <dbReference type="HAMAP-Rule" id="MF_00382"/>
    </source>
</evidence>
<evidence type="ECO:0000305" key="2"/>
<accession>Q6LQ71</accession>
<name>RL20_PHOPR</name>
<dbReference type="EMBL" id="CR378670">
    <property type="protein sequence ID" value="CAG20555.1"/>
    <property type="molecule type" value="Genomic_DNA"/>
</dbReference>
<dbReference type="RefSeq" id="WP_011218847.1">
    <property type="nucleotide sequence ID" value="NC_006370.1"/>
</dbReference>
<dbReference type="SMR" id="Q6LQ71"/>
<dbReference type="STRING" id="298386.PBPRA2157"/>
<dbReference type="KEGG" id="ppr:PBPRA2157"/>
<dbReference type="eggNOG" id="COG0292">
    <property type="taxonomic scope" value="Bacteria"/>
</dbReference>
<dbReference type="HOGENOM" id="CLU_123265_0_1_6"/>
<dbReference type="Proteomes" id="UP000000593">
    <property type="component" value="Chromosome 1"/>
</dbReference>
<dbReference type="GO" id="GO:1990904">
    <property type="term" value="C:ribonucleoprotein complex"/>
    <property type="evidence" value="ECO:0007669"/>
    <property type="project" value="UniProtKB-KW"/>
</dbReference>
<dbReference type="GO" id="GO:0005840">
    <property type="term" value="C:ribosome"/>
    <property type="evidence" value="ECO:0007669"/>
    <property type="project" value="UniProtKB-KW"/>
</dbReference>
<dbReference type="GO" id="GO:0019843">
    <property type="term" value="F:rRNA binding"/>
    <property type="evidence" value="ECO:0007669"/>
    <property type="project" value="UniProtKB-UniRule"/>
</dbReference>
<dbReference type="GO" id="GO:0003735">
    <property type="term" value="F:structural constituent of ribosome"/>
    <property type="evidence" value="ECO:0007669"/>
    <property type="project" value="InterPro"/>
</dbReference>
<dbReference type="GO" id="GO:0000027">
    <property type="term" value="P:ribosomal large subunit assembly"/>
    <property type="evidence" value="ECO:0007669"/>
    <property type="project" value="UniProtKB-UniRule"/>
</dbReference>
<dbReference type="GO" id="GO:0006412">
    <property type="term" value="P:translation"/>
    <property type="evidence" value="ECO:0007669"/>
    <property type="project" value="InterPro"/>
</dbReference>
<dbReference type="CDD" id="cd07026">
    <property type="entry name" value="Ribosomal_L20"/>
    <property type="match status" value="1"/>
</dbReference>
<dbReference type="FunFam" id="1.10.1900.20:FF:000001">
    <property type="entry name" value="50S ribosomal protein L20"/>
    <property type="match status" value="1"/>
</dbReference>
<dbReference type="Gene3D" id="6.10.160.10">
    <property type="match status" value="1"/>
</dbReference>
<dbReference type="Gene3D" id="1.10.1900.20">
    <property type="entry name" value="Ribosomal protein L20"/>
    <property type="match status" value="1"/>
</dbReference>
<dbReference type="HAMAP" id="MF_00382">
    <property type="entry name" value="Ribosomal_bL20"/>
    <property type="match status" value="1"/>
</dbReference>
<dbReference type="InterPro" id="IPR005813">
    <property type="entry name" value="Ribosomal_bL20"/>
</dbReference>
<dbReference type="InterPro" id="IPR049946">
    <property type="entry name" value="RIBOSOMAL_L20_CS"/>
</dbReference>
<dbReference type="InterPro" id="IPR035566">
    <property type="entry name" value="Ribosomal_protein_bL20_C"/>
</dbReference>
<dbReference type="NCBIfam" id="TIGR01032">
    <property type="entry name" value="rplT_bact"/>
    <property type="match status" value="1"/>
</dbReference>
<dbReference type="PANTHER" id="PTHR10986">
    <property type="entry name" value="39S RIBOSOMAL PROTEIN L20"/>
    <property type="match status" value="1"/>
</dbReference>
<dbReference type="Pfam" id="PF00453">
    <property type="entry name" value="Ribosomal_L20"/>
    <property type="match status" value="1"/>
</dbReference>
<dbReference type="PRINTS" id="PR00062">
    <property type="entry name" value="RIBOSOMALL20"/>
</dbReference>
<dbReference type="SUPFAM" id="SSF74731">
    <property type="entry name" value="Ribosomal protein L20"/>
    <property type="match status" value="1"/>
</dbReference>
<dbReference type="PROSITE" id="PS00937">
    <property type="entry name" value="RIBOSOMAL_L20"/>
    <property type="match status" value="1"/>
</dbReference>
<proteinExistence type="inferred from homology"/>
<protein>
    <recommendedName>
        <fullName evidence="1">Large ribosomal subunit protein bL20</fullName>
    </recommendedName>
    <alternativeName>
        <fullName evidence="2">50S ribosomal protein L20</fullName>
    </alternativeName>
</protein>
<reference key="1">
    <citation type="journal article" date="2005" name="Science">
        <title>Life at depth: Photobacterium profundum genome sequence and expression analysis.</title>
        <authorList>
            <person name="Vezzi A."/>
            <person name="Campanaro S."/>
            <person name="D'Angelo M."/>
            <person name="Simonato F."/>
            <person name="Vitulo N."/>
            <person name="Lauro F.M."/>
            <person name="Cestaro A."/>
            <person name="Malacrida G."/>
            <person name="Simionati B."/>
            <person name="Cannata N."/>
            <person name="Romualdi C."/>
            <person name="Bartlett D.H."/>
            <person name="Valle G."/>
        </authorList>
    </citation>
    <scope>NUCLEOTIDE SEQUENCE [LARGE SCALE GENOMIC DNA]</scope>
    <source>
        <strain>ATCC BAA-1253 / SS9</strain>
    </source>
</reference>
<comment type="function">
    <text evidence="1">Binds directly to 23S ribosomal RNA and is necessary for the in vitro assembly process of the 50S ribosomal subunit. It is not involved in the protein synthesizing functions of that subunit.</text>
</comment>
<comment type="similarity">
    <text evidence="1">Belongs to the bacterial ribosomal protein bL20 family.</text>
</comment>
<sequence>MPRVKRGVQARARHKKVLKQAKGYYGARSRVYRVAFQAVTKAGQYAYRDRRQKKRTFRALWIARINAAARQNGLSYSRLINGLKKASIEIDRKILADIAVFDKATFTVLVEKAKAAL</sequence>
<keyword id="KW-1185">Reference proteome</keyword>
<keyword id="KW-0687">Ribonucleoprotein</keyword>
<keyword id="KW-0689">Ribosomal protein</keyword>
<keyword id="KW-0694">RNA-binding</keyword>
<keyword id="KW-0699">rRNA-binding</keyword>
<organism>
    <name type="scientific">Photobacterium profundum (strain SS9)</name>
    <dbReference type="NCBI Taxonomy" id="298386"/>
    <lineage>
        <taxon>Bacteria</taxon>
        <taxon>Pseudomonadati</taxon>
        <taxon>Pseudomonadota</taxon>
        <taxon>Gammaproteobacteria</taxon>
        <taxon>Vibrionales</taxon>
        <taxon>Vibrionaceae</taxon>
        <taxon>Photobacterium</taxon>
    </lineage>
</organism>
<gene>
    <name evidence="1" type="primary">rplT</name>
    <name type="ordered locus">PBPRA2157</name>
</gene>
<feature type="chain" id="PRO_0000177200" description="Large ribosomal subunit protein bL20">
    <location>
        <begin position="1"/>
        <end position="117"/>
    </location>
</feature>